<comment type="function">
    <text evidence="3 6">Inhibits the interaction of APBA2 with amyloid-beta precursor protein (APP), and hence allows formation of amyloid-beta. May enhance the activity of HIF1A and thus promote glycolysis under normoxic conditions; the function requires its ABM domain and may implicate the stabilization of the interaction between HIF1AN and APBA3.</text>
</comment>
<comment type="subunit">
    <text evidence="3 5 6">Interacts with the N-terminal domain of APBA2. Interacts with NEK2. Interacts with APBA3; APBA3 seems to mediate the interaction between NECAB3 and HIF1AN.</text>
</comment>
<comment type="interaction">
    <interactant intactId="EBI-5773009">
        <id>Q96P71</id>
    </interactant>
    <interactant intactId="EBI-6115839">
        <id>O96018</id>
        <label>APBA3</label>
    </interactant>
    <organismsDiffer>false</organismsDiffer>
    <experiments>5</experiments>
</comment>
<comment type="interaction">
    <interactant intactId="EBI-15098952">
        <id>Q96P71-2</id>
    </interactant>
    <interactant intactId="EBI-6115839">
        <id>O96018</id>
        <label>APBA3</label>
    </interactant>
    <organismsDiffer>false</organismsDiffer>
    <experiments>4</experiments>
</comment>
<comment type="interaction">
    <interactant intactId="EBI-15098952">
        <id>Q96P71-2</id>
    </interactant>
    <interactant intactId="EBI-8592297">
        <id>P21917</id>
        <label>DRD4</label>
    </interactant>
    <organismsDiffer>false</organismsDiffer>
    <experiments>3</experiments>
</comment>
<comment type="interaction">
    <interactant intactId="EBI-15098952">
        <id>Q96P71-2</id>
    </interactant>
    <interactant intactId="EBI-25832196">
        <id>Q14114-3</id>
        <label>LRP8</label>
    </interactant>
    <organismsDiffer>false</organismsDiffer>
    <experiments>3</experiments>
</comment>
<comment type="subcellular location">
    <subcellularLocation>
        <location evidence="3 5 6">Golgi apparatus</location>
    </subcellularLocation>
</comment>
<comment type="alternative products">
    <event type="alternative splicing"/>
    <isoform>
        <id>Q96P71-1</id>
        <name>2</name>
        <name>XB51-alpha</name>
        <sequence type="displayed"/>
    </isoform>
    <isoform>
        <id>Q96P71-2</id>
        <name>1</name>
        <name>XB51-beta</name>
        <sequence type="described" ref="VSP_000739"/>
    </isoform>
    <isoform>
        <id>Q96P71-3</id>
        <name>3</name>
        <sequence type="described" ref="VSP_000737 VSP_000738"/>
    </isoform>
    <text>Additional isoforms seem to exist. Experimental confirmation may be lacking for some isoforms.</text>
</comment>
<comment type="tissue specificity">
    <text evidence="3 4">Strongly expressed in heart and skeletal muscle, moderately in brain and pancreas.</text>
</comment>
<comment type="PTM">
    <text evidence="12">Phosphorylated by NEK2.</text>
</comment>
<comment type="miscellaneous">
    <molecule>Isoform 3</molecule>
    <text evidence="11">May result from the retention of an intron in the cDNA.</text>
</comment>
<comment type="sequence caution" evidence="11">
    <conflict type="frameshift">
        <sequence resource="EMBL-CDS" id="BAB14649"/>
    </conflict>
</comment>
<comment type="sequence caution" evidence="11">
    <conflict type="erroneous initiation">
        <sequence resource="EMBL-CDS" id="BAB16413"/>
    </conflict>
</comment>
<name>NECA3_HUMAN</name>
<evidence type="ECO:0000255" key="1">
    <source>
        <dbReference type="PROSITE-ProRule" id="PRU00448"/>
    </source>
</evidence>
<evidence type="ECO:0000256" key="2">
    <source>
        <dbReference type="SAM" id="MobiDB-lite"/>
    </source>
</evidence>
<evidence type="ECO:0000269" key="3">
    <source>
    </source>
</evidence>
<evidence type="ECO:0000269" key="4">
    <source>
    </source>
</evidence>
<evidence type="ECO:0000269" key="5">
    <source>
    </source>
</evidence>
<evidence type="ECO:0000269" key="6">
    <source>
    </source>
</evidence>
<evidence type="ECO:0000303" key="7">
    <source>
    </source>
</evidence>
<evidence type="ECO:0000303" key="8">
    <source>
    </source>
</evidence>
<evidence type="ECO:0000303" key="9">
    <source>
    </source>
</evidence>
<evidence type="ECO:0000303" key="10">
    <source>
    </source>
</evidence>
<evidence type="ECO:0000305" key="11"/>
<evidence type="ECO:0000305" key="12">
    <source>
    </source>
</evidence>
<gene>
    <name type="primary">NECAB3</name>
    <name type="synonym">APBA2BP</name>
    <name type="synonym">NIP1</name>
    <name type="synonym">SYTIP2</name>
    <name type="synonym">XB51</name>
</gene>
<organism>
    <name type="scientific">Homo sapiens</name>
    <name type="common">Human</name>
    <dbReference type="NCBI Taxonomy" id="9606"/>
    <lineage>
        <taxon>Eukaryota</taxon>
        <taxon>Metazoa</taxon>
        <taxon>Chordata</taxon>
        <taxon>Craniata</taxon>
        <taxon>Vertebrata</taxon>
        <taxon>Euteleostomi</taxon>
        <taxon>Mammalia</taxon>
        <taxon>Eutheria</taxon>
        <taxon>Euarchontoglires</taxon>
        <taxon>Primates</taxon>
        <taxon>Haplorrhini</taxon>
        <taxon>Catarrhini</taxon>
        <taxon>Hominidae</taxon>
        <taxon>Homo</taxon>
    </lineage>
</organism>
<feature type="chain" id="PRO_0000073863" description="N-terminal EF-hand calcium-binding protein 3">
    <location>
        <begin position="1"/>
        <end position="396"/>
    </location>
</feature>
<feature type="domain" description="EF-hand" evidence="1">
    <location>
        <begin position="36"/>
        <end position="71"/>
    </location>
</feature>
<feature type="domain" description="ABM">
    <location>
        <begin position="296"/>
        <end position="385"/>
    </location>
</feature>
<feature type="region of interest" description="Disordered" evidence="2">
    <location>
        <begin position="14"/>
        <end position="36"/>
    </location>
</feature>
<feature type="region of interest" description="Required for interaction with APBA3" evidence="6">
    <location>
        <begin position="181"/>
        <end position="190"/>
    </location>
</feature>
<feature type="region of interest" description="Disordered" evidence="2">
    <location>
        <begin position="197"/>
        <end position="220"/>
    </location>
</feature>
<feature type="compositionally biased region" description="Pro residues" evidence="2">
    <location>
        <begin position="14"/>
        <end position="34"/>
    </location>
</feature>
<feature type="compositionally biased region" description="Polar residues" evidence="2">
    <location>
        <begin position="206"/>
        <end position="217"/>
    </location>
</feature>
<feature type="binding site" evidence="1">
    <location>
        <position position="49"/>
    </location>
    <ligand>
        <name>Ca(2+)</name>
        <dbReference type="ChEBI" id="CHEBI:29108"/>
    </ligand>
</feature>
<feature type="binding site" evidence="1">
    <location>
        <position position="51"/>
    </location>
    <ligand>
        <name>Ca(2+)</name>
        <dbReference type="ChEBI" id="CHEBI:29108"/>
    </ligand>
</feature>
<feature type="binding site" evidence="1">
    <location>
        <position position="53"/>
    </location>
    <ligand>
        <name>Ca(2+)</name>
        <dbReference type="ChEBI" id="CHEBI:29108"/>
    </ligand>
</feature>
<feature type="binding site" evidence="1">
    <location>
        <position position="55"/>
    </location>
    <ligand>
        <name>Ca(2+)</name>
        <dbReference type="ChEBI" id="CHEBI:29108"/>
    </ligand>
</feature>
<feature type="binding site" evidence="1">
    <location>
        <position position="60"/>
    </location>
    <ligand>
        <name>Ca(2+)</name>
        <dbReference type="ChEBI" id="CHEBI:29108"/>
    </ligand>
</feature>
<feature type="splice variant" id="VSP_000737" description="In isoform 3." evidence="9">
    <original>SDAESVEAQSRLCGSRRAGRRALRSVSR</original>
    <variation>YVRVLSTCGASAQAPIVPPFQIPTVPAS</variation>
    <location>
        <begin position="176"/>
        <end position="203"/>
    </location>
</feature>
<feature type="splice variant" id="VSP_000738" description="In isoform 3." evidence="9">
    <location>
        <begin position="204"/>
        <end position="396"/>
    </location>
</feature>
<feature type="splice variant" id="VSP_000739" description="In isoform 1." evidence="7 8 9 10">
    <location>
        <begin position="242"/>
        <end position="275"/>
    </location>
</feature>
<feature type="sequence variant" id="VAR_048643" description="In dbSNP:rs17124890.">
    <original>P</original>
    <variation>L</variation>
    <location>
        <position position="254"/>
    </location>
</feature>
<feature type="mutagenesis site" description="No effect on interaction with APBA3." evidence="6">
    <original>H</original>
    <variation>A</variation>
    <location>
        <position position="358"/>
    </location>
</feature>
<feature type="sequence conflict" description="In Ref. 1; AAG28415." evidence="11" ref="1">
    <original>T</original>
    <variation>I</variation>
    <location>
        <position position="383"/>
    </location>
</feature>
<reference key="1">
    <citation type="journal article" date="2002" name="Neuroscience">
        <title>NECABs: a family of neuronal Ca(2+)-binding proteins with an unusual domain structure and a restricted expression pattern.</title>
        <authorList>
            <person name="Sugita S."/>
            <person name="Ho A."/>
            <person name="Suedhof T.C."/>
        </authorList>
    </citation>
    <scope>NUCLEOTIDE SEQUENCE [MRNA] (ISOFORM 1)</scope>
    <scope>TISSUE SPECIFICITY</scope>
</reference>
<reference key="2">
    <citation type="journal article" date="2004" name="Exp. Cell Res.">
        <title>NIP1/XB51/NECAB3 is a potential substrate of Nek2, suggesting specific roles of Nek2 in Golgi.</title>
        <authorList>
            <person name="Yoo J.C."/>
            <person name="Chang J.R."/>
            <person name="Kim S.H."/>
            <person name="Jang S.K."/>
            <person name="Wolgemuth D.J."/>
            <person name="Kim K."/>
            <person name="Rhee K."/>
        </authorList>
    </citation>
    <scope>NUCLEOTIDE SEQUENCE [MRNA] (ISOFORM 1)</scope>
    <scope>INTERACTION WITH NEK2</scope>
    <scope>SUBCELLULAR LOCATION</scope>
    <scope>PHOSPHORYLATION</scope>
    <source>
        <tissue>Liver</tissue>
    </source>
</reference>
<reference key="3">
    <citation type="journal article" date="2004" name="Nat. Genet.">
        <title>Complete sequencing and characterization of 21,243 full-length human cDNAs.</title>
        <authorList>
            <person name="Ota T."/>
            <person name="Suzuki Y."/>
            <person name="Nishikawa T."/>
            <person name="Otsuki T."/>
            <person name="Sugiyama T."/>
            <person name="Irie R."/>
            <person name="Wakamatsu A."/>
            <person name="Hayashi K."/>
            <person name="Sato H."/>
            <person name="Nagai K."/>
            <person name="Kimura K."/>
            <person name="Makita H."/>
            <person name="Sekine M."/>
            <person name="Obayashi M."/>
            <person name="Nishi T."/>
            <person name="Shibahara T."/>
            <person name="Tanaka T."/>
            <person name="Ishii S."/>
            <person name="Yamamoto J."/>
            <person name="Saito K."/>
            <person name="Kawai Y."/>
            <person name="Isono Y."/>
            <person name="Nakamura Y."/>
            <person name="Nagahari K."/>
            <person name="Murakami K."/>
            <person name="Yasuda T."/>
            <person name="Iwayanagi T."/>
            <person name="Wagatsuma M."/>
            <person name="Shiratori A."/>
            <person name="Sudo H."/>
            <person name="Hosoiri T."/>
            <person name="Kaku Y."/>
            <person name="Kodaira H."/>
            <person name="Kondo H."/>
            <person name="Sugawara M."/>
            <person name="Takahashi M."/>
            <person name="Kanda K."/>
            <person name="Yokoi T."/>
            <person name="Furuya T."/>
            <person name="Kikkawa E."/>
            <person name="Omura Y."/>
            <person name="Abe K."/>
            <person name="Kamihara K."/>
            <person name="Katsuta N."/>
            <person name="Sato K."/>
            <person name="Tanikawa M."/>
            <person name="Yamazaki M."/>
            <person name="Ninomiya K."/>
            <person name="Ishibashi T."/>
            <person name="Yamashita H."/>
            <person name="Murakawa K."/>
            <person name="Fujimori K."/>
            <person name="Tanai H."/>
            <person name="Kimata M."/>
            <person name="Watanabe M."/>
            <person name="Hiraoka S."/>
            <person name="Chiba Y."/>
            <person name="Ishida S."/>
            <person name="Ono Y."/>
            <person name="Takiguchi S."/>
            <person name="Watanabe S."/>
            <person name="Yosida M."/>
            <person name="Hotuta T."/>
            <person name="Kusano J."/>
            <person name="Kanehori K."/>
            <person name="Takahashi-Fujii A."/>
            <person name="Hara H."/>
            <person name="Tanase T.-O."/>
            <person name="Nomura Y."/>
            <person name="Togiya S."/>
            <person name="Komai F."/>
            <person name="Hara R."/>
            <person name="Takeuchi K."/>
            <person name="Arita M."/>
            <person name="Imose N."/>
            <person name="Musashino K."/>
            <person name="Yuuki H."/>
            <person name="Oshima A."/>
            <person name="Sasaki N."/>
            <person name="Aotsuka S."/>
            <person name="Yoshikawa Y."/>
            <person name="Matsunawa H."/>
            <person name="Ichihara T."/>
            <person name="Shiohata N."/>
            <person name="Sano S."/>
            <person name="Moriya S."/>
            <person name="Momiyama H."/>
            <person name="Satoh N."/>
            <person name="Takami S."/>
            <person name="Terashima Y."/>
            <person name="Suzuki O."/>
            <person name="Nakagawa S."/>
            <person name="Senoh A."/>
            <person name="Mizoguchi H."/>
            <person name="Goto Y."/>
            <person name="Shimizu F."/>
            <person name="Wakebe H."/>
            <person name="Hishigaki H."/>
            <person name="Watanabe T."/>
            <person name="Sugiyama A."/>
            <person name="Takemoto M."/>
            <person name="Kawakami B."/>
            <person name="Yamazaki M."/>
            <person name="Watanabe K."/>
            <person name="Kumagai A."/>
            <person name="Itakura S."/>
            <person name="Fukuzumi Y."/>
            <person name="Fujimori Y."/>
            <person name="Komiyama M."/>
            <person name="Tashiro H."/>
            <person name="Tanigami A."/>
            <person name="Fujiwara T."/>
            <person name="Ono T."/>
            <person name="Yamada K."/>
            <person name="Fujii Y."/>
            <person name="Ozaki K."/>
            <person name="Hirao M."/>
            <person name="Ohmori Y."/>
            <person name="Kawabata A."/>
            <person name="Hikiji T."/>
            <person name="Kobatake N."/>
            <person name="Inagaki H."/>
            <person name="Ikema Y."/>
            <person name="Okamoto S."/>
            <person name="Okitani R."/>
            <person name="Kawakami T."/>
            <person name="Noguchi S."/>
            <person name="Itoh T."/>
            <person name="Shigeta K."/>
            <person name="Senba T."/>
            <person name="Matsumura K."/>
            <person name="Nakajima Y."/>
            <person name="Mizuno T."/>
            <person name="Morinaga M."/>
            <person name="Sasaki M."/>
            <person name="Togashi T."/>
            <person name="Oyama M."/>
            <person name="Hata H."/>
            <person name="Watanabe M."/>
            <person name="Komatsu T."/>
            <person name="Mizushima-Sugano J."/>
            <person name="Satoh T."/>
            <person name="Shirai Y."/>
            <person name="Takahashi Y."/>
            <person name="Nakagawa K."/>
            <person name="Okumura K."/>
            <person name="Nagase T."/>
            <person name="Nomura N."/>
            <person name="Kikuchi H."/>
            <person name="Masuho Y."/>
            <person name="Yamashita R."/>
            <person name="Nakai K."/>
            <person name="Yada T."/>
            <person name="Nakamura Y."/>
            <person name="Ohara O."/>
            <person name="Isogai T."/>
            <person name="Sugano S."/>
        </authorList>
    </citation>
    <scope>NUCLEOTIDE SEQUENCE [LARGE SCALE MRNA] (ISOFORMS 1 AND 3)</scope>
    <source>
        <tissue>Placenta</tissue>
        <tissue>Skeletal muscle</tissue>
    </source>
</reference>
<reference key="4">
    <citation type="journal article" date="2001" name="Nature">
        <title>The DNA sequence and comparative analysis of human chromosome 20.</title>
        <authorList>
            <person name="Deloukas P."/>
            <person name="Matthews L.H."/>
            <person name="Ashurst J.L."/>
            <person name="Burton J."/>
            <person name="Gilbert J.G.R."/>
            <person name="Jones M."/>
            <person name="Stavrides G."/>
            <person name="Almeida J.P."/>
            <person name="Babbage A.K."/>
            <person name="Bagguley C.L."/>
            <person name="Bailey J."/>
            <person name="Barlow K.F."/>
            <person name="Bates K.N."/>
            <person name="Beard L.M."/>
            <person name="Beare D.M."/>
            <person name="Beasley O.P."/>
            <person name="Bird C.P."/>
            <person name="Blakey S.E."/>
            <person name="Bridgeman A.M."/>
            <person name="Brown A.J."/>
            <person name="Buck D."/>
            <person name="Burrill W.D."/>
            <person name="Butler A.P."/>
            <person name="Carder C."/>
            <person name="Carter N.P."/>
            <person name="Chapman J.C."/>
            <person name="Clamp M."/>
            <person name="Clark G."/>
            <person name="Clark L.N."/>
            <person name="Clark S.Y."/>
            <person name="Clee C.M."/>
            <person name="Clegg S."/>
            <person name="Cobley V.E."/>
            <person name="Collier R.E."/>
            <person name="Connor R.E."/>
            <person name="Corby N.R."/>
            <person name="Coulson A."/>
            <person name="Coville G.J."/>
            <person name="Deadman R."/>
            <person name="Dhami P.D."/>
            <person name="Dunn M."/>
            <person name="Ellington A.G."/>
            <person name="Frankland J.A."/>
            <person name="Fraser A."/>
            <person name="French L."/>
            <person name="Garner P."/>
            <person name="Grafham D.V."/>
            <person name="Griffiths C."/>
            <person name="Griffiths M.N.D."/>
            <person name="Gwilliam R."/>
            <person name="Hall R.E."/>
            <person name="Hammond S."/>
            <person name="Harley J.L."/>
            <person name="Heath P.D."/>
            <person name="Ho S."/>
            <person name="Holden J.L."/>
            <person name="Howden P.J."/>
            <person name="Huckle E."/>
            <person name="Hunt A.R."/>
            <person name="Hunt S.E."/>
            <person name="Jekosch K."/>
            <person name="Johnson C.M."/>
            <person name="Johnson D."/>
            <person name="Kay M.P."/>
            <person name="Kimberley A.M."/>
            <person name="King A."/>
            <person name="Knights A."/>
            <person name="Laird G.K."/>
            <person name="Lawlor S."/>
            <person name="Lehvaeslaiho M.H."/>
            <person name="Leversha M.A."/>
            <person name="Lloyd C."/>
            <person name="Lloyd D.M."/>
            <person name="Lovell J.D."/>
            <person name="Marsh V.L."/>
            <person name="Martin S.L."/>
            <person name="McConnachie L.J."/>
            <person name="McLay K."/>
            <person name="McMurray A.A."/>
            <person name="Milne S.A."/>
            <person name="Mistry D."/>
            <person name="Moore M.J.F."/>
            <person name="Mullikin J.C."/>
            <person name="Nickerson T."/>
            <person name="Oliver K."/>
            <person name="Parker A."/>
            <person name="Patel R."/>
            <person name="Pearce T.A.V."/>
            <person name="Peck A.I."/>
            <person name="Phillimore B.J.C.T."/>
            <person name="Prathalingam S.R."/>
            <person name="Plumb R.W."/>
            <person name="Ramsay H."/>
            <person name="Rice C.M."/>
            <person name="Ross M.T."/>
            <person name="Scott C.E."/>
            <person name="Sehra H.K."/>
            <person name="Shownkeen R."/>
            <person name="Sims S."/>
            <person name="Skuce C.D."/>
            <person name="Smith M.L."/>
            <person name="Soderlund C."/>
            <person name="Steward C.A."/>
            <person name="Sulston J.E."/>
            <person name="Swann R.M."/>
            <person name="Sycamore N."/>
            <person name="Taylor R."/>
            <person name="Tee L."/>
            <person name="Thomas D.W."/>
            <person name="Thorpe A."/>
            <person name="Tracey A."/>
            <person name="Tromans A.C."/>
            <person name="Vaudin M."/>
            <person name="Wall M."/>
            <person name="Wallis J.M."/>
            <person name="Whitehead S.L."/>
            <person name="Whittaker P."/>
            <person name="Willey D.L."/>
            <person name="Williams L."/>
            <person name="Williams S.A."/>
            <person name="Wilming L."/>
            <person name="Wray P.W."/>
            <person name="Hubbard T."/>
            <person name="Durbin R.M."/>
            <person name="Bentley D.R."/>
            <person name="Beck S."/>
            <person name="Rogers J."/>
        </authorList>
    </citation>
    <scope>NUCLEOTIDE SEQUENCE [LARGE SCALE GENOMIC DNA]</scope>
</reference>
<reference key="5">
    <citation type="submission" date="2005-09" db="EMBL/GenBank/DDBJ databases">
        <authorList>
            <person name="Mural R.J."/>
            <person name="Istrail S."/>
            <person name="Sutton G.G."/>
            <person name="Florea L."/>
            <person name="Halpern A.L."/>
            <person name="Mobarry C.M."/>
            <person name="Lippert R."/>
            <person name="Walenz B."/>
            <person name="Shatkay H."/>
            <person name="Dew I."/>
            <person name="Miller J.R."/>
            <person name="Flanigan M.J."/>
            <person name="Edwards N.J."/>
            <person name="Bolanos R."/>
            <person name="Fasulo D."/>
            <person name="Halldorsson B.V."/>
            <person name="Hannenhalli S."/>
            <person name="Turner R."/>
            <person name="Yooseph S."/>
            <person name="Lu F."/>
            <person name="Nusskern D.R."/>
            <person name="Shue B.C."/>
            <person name="Zheng X.H."/>
            <person name="Zhong F."/>
            <person name="Delcher A.L."/>
            <person name="Huson D.H."/>
            <person name="Kravitz S.A."/>
            <person name="Mouchard L."/>
            <person name="Reinert K."/>
            <person name="Remington K.A."/>
            <person name="Clark A.G."/>
            <person name="Waterman M.S."/>
            <person name="Eichler E.E."/>
            <person name="Adams M.D."/>
            <person name="Hunkapiller M.W."/>
            <person name="Myers E.W."/>
            <person name="Venter J.C."/>
        </authorList>
    </citation>
    <scope>NUCLEOTIDE SEQUENCE [LARGE SCALE GENOMIC DNA]</scope>
</reference>
<reference key="6">
    <citation type="journal article" date="2004" name="Genome Res.">
        <title>The status, quality, and expansion of the NIH full-length cDNA project: the Mammalian Gene Collection (MGC).</title>
        <authorList>
            <consortium name="The MGC Project Team"/>
        </authorList>
    </citation>
    <scope>NUCLEOTIDE SEQUENCE [LARGE SCALE MRNA] (ISOFORM 1)</scope>
</reference>
<reference key="7">
    <citation type="journal article" date="2000" name="J. Biol. Chem.">
        <title>Regulation of X11L-dependent amyloid precursor protein metabolism by XB51, a novel X11L-binding protein.</title>
        <authorList>
            <person name="Lee D.-S."/>
            <person name="Tomita S."/>
            <person name="Kirino Y."/>
            <person name="Suzuki T."/>
        </authorList>
    </citation>
    <scope>NUCLEOTIDE SEQUENCE [MRNA] OF 65-396 (ISOFORM 2)</scope>
    <scope>FUNCTION</scope>
    <scope>SUBCELLULAR LOCATION</scope>
    <scope>TISSUE SPECIFICITY</scope>
    <scope>INTERACTION WITH APBA2</scope>
    <source>
        <tissue>Brain</tissue>
    </source>
</reference>
<reference key="8">
    <citation type="journal article" date="2016" name="Sci. Rep.">
        <title>NECAB3 promotes activation of hypoxia-inducible factor-1 during normoxia and enhances tumourigenicity of cancer cells.</title>
        <authorList>
            <person name="Nakaoka H.J."/>
            <person name="Hara T."/>
            <person name="Yoshino S."/>
            <person name="Kanamori A."/>
            <person name="Matsui Y."/>
            <person name="Shimamura T."/>
            <person name="Sato H."/>
            <person name="Murakami Y."/>
            <person name="Seiki M."/>
            <person name="Sakamoto T."/>
        </authorList>
    </citation>
    <scope>FUNCTION</scope>
    <scope>INTERACTION WITH APBA3 AND HIF1AN</scope>
    <scope>SUBCELLULAR LOCATION</scope>
    <scope>MUTAGENESIS OF HIS-358</scope>
</reference>
<proteinExistence type="evidence at protein level"/>
<dbReference type="EMBL" id="AF193759">
    <property type="protein sequence ID" value="AAG28415.1"/>
    <property type="molecule type" value="mRNA"/>
</dbReference>
<dbReference type="EMBL" id="AF409141">
    <property type="protein sequence ID" value="AAL01118.1"/>
    <property type="molecule type" value="mRNA"/>
</dbReference>
<dbReference type="EMBL" id="AK023706">
    <property type="protein sequence ID" value="BAB14649.1"/>
    <property type="status" value="ALT_FRAME"/>
    <property type="molecule type" value="mRNA"/>
</dbReference>
<dbReference type="EMBL" id="AK291895">
    <property type="protein sequence ID" value="BAF84584.1"/>
    <property type="molecule type" value="mRNA"/>
</dbReference>
<dbReference type="EMBL" id="AL121906">
    <property type="status" value="NOT_ANNOTATED_CDS"/>
    <property type="molecule type" value="Genomic_DNA"/>
</dbReference>
<dbReference type="EMBL" id="CH471077">
    <property type="protein sequence ID" value="EAW76302.1"/>
    <property type="molecule type" value="Genomic_DNA"/>
</dbReference>
<dbReference type="EMBL" id="CH471077">
    <property type="protein sequence ID" value="EAW76304.1"/>
    <property type="molecule type" value="Genomic_DNA"/>
</dbReference>
<dbReference type="EMBL" id="BC047673">
    <property type="protein sequence ID" value="AAH47673.1"/>
    <property type="molecule type" value="mRNA"/>
</dbReference>
<dbReference type="EMBL" id="AB039947">
    <property type="protein sequence ID" value="BAB16413.1"/>
    <property type="status" value="ALT_INIT"/>
    <property type="molecule type" value="mRNA"/>
</dbReference>
<dbReference type="CCDS" id="CCDS42866.1">
    <molecule id="Q96P71-1"/>
</dbReference>
<dbReference type="CCDS" id="CCDS42867.1">
    <molecule id="Q96P71-2"/>
</dbReference>
<dbReference type="RefSeq" id="NP_112508.3">
    <molecule id="Q96P71-2"/>
    <property type="nucleotide sequence ID" value="NM_031231.3"/>
</dbReference>
<dbReference type="RefSeq" id="NP_112509.3">
    <molecule id="Q96P71-1"/>
    <property type="nucleotide sequence ID" value="NM_031232.3"/>
</dbReference>
<dbReference type="SMR" id="Q96P71"/>
<dbReference type="BioGRID" id="122006">
    <property type="interactions" value="12"/>
</dbReference>
<dbReference type="CORUM" id="Q96P71"/>
<dbReference type="FunCoup" id="Q96P71">
    <property type="interactions" value="547"/>
</dbReference>
<dbReference type="IntAct" id="Q96P71">
    <property type="interactions" value="11"/>
</dbReference>
<dbReference type="MINT" id="Q96P71"/>
<dbReference type="STRING" id="9606.ENSP00000246190"/>
<dbReference type="CarbonylDB" id="Q96P71"/>
<dbReference type="iPTMnet" id="Q96P71"/>
<dbReference type="PhosphoSitePlus" id="Q96P71"/>
<dbReference type="BioMuta" id="NECAB3"/>
<dbReference type="DMDM" id="41688800"/>
<dbReference type="jPOST" id="Q96P71"/>
<dbReference type="MassIVE" id="Q96P71"/>
<dbReference type="PaxDb" id="9606-ENSP00000246190"/>
<dbReference type="PeptideAtlas" id="Q96P71"/>
<dbReference type="ProteomicsDB" id="77645">
    <molecule id="Q96P71-1"/>
</dbReference>
<dbReference type="ProteomicsDB" id="77646">
    <molecule id="Q96P71-2"/>
</dbReference>
<dbReference type="ProteomicsDB" id="77647">
    <molecule id="Q96P71-3"/>
</dbReference>
<dbReference type="Pumba" id="Q96P71"/>
<dbReference type="Antibodypedia" id="25664">
    <property type="antibodies" value="137 antibodies from 27 providers"/>
</dbReference>
<dbReference type="DNASU" id="63941"/>
<dbReference type="Ensembl" id="ENST00000246190.11">
    <molecule id="Q96P71-1"/>
    <property type="protein sequence ID" value="ENSP00000246190.6"/>
    <property type="gene ID" value="ENSG00000125967.17"/>
</dbReference>
<dbReference type="Ensembl" id="ENST00000375238.8">
    <molecule id="Q96P71-2"/>
    <property type="protein sequence ID" value="ENSP00000364386.4"/>
    <property type="gene ID" value="ENSG00000125967.17"/>
</dbReference>
<dbReference type="GeneID" id="63941"/>
<dbReference type="KEGG" id="hsa:63941"/>
<dbReference type="MANE-Select" id="ENST00000246190.11">
    <property type="protein sequence ID" value="ENSP00000246190.6"/>
    <property type="RefSeq nucleotide sequence ID" value="NM_031232.4"/>
    <property type="RefSeq protein sequence ID" value="NP_112509.3"/>
</dbReference>
<dbReference type="UCSC" id="uc002wzm.5">
    <molecule id="Q96P71-1"/>
    <property type="organism name" value="human"/>
</dbReference>
<dbReference type="AGR" id="HGNC:15851"/>
<dbReference type="CTD" id="63941"/>
<dbReference type="DisGeNET" id="63941"/>
<dbReference type="GeneCards" id="NECAB3"/>
<dbReference type="HGNC" id="HGNC:15851">
    <property type="gene designation" value="NECAB3"/>
</dbReference>
<dbReference type="HPA" id="ENSG00000125967">
    <property type="expression patterns" value="Low tissue specificity"/>
</dbReference>
<dbReference type="MIM" id="612478">
    <property type="type" value="gene"/>
</dbReference>
<dbReference type="neXtProt" id="NX_Q96P71"/>
<dbReference type="OpenTargets" id="ENSG00000125967"/>
<dbReference type="PharmGKB" id="PA24871"/>
<dbReference type="VEuPathDB" id="HostDB:ENSG00000125967"/>
<dbReference type="eggNOG" id="ENOG502QWRY">
    <property type="taxonomic scope" value="Eukaryota"/>
</dbReference>
<dbReference type="GeneTree" id="ENSGT00950000183131"/>
<dbReference type="InParanoid" id="Q96P71"/>
<dbReference type="OMA" id="RNNMNKS"/>
<dbReference type="OrthoDB" id="289247at2759"/>
<dbReference type="PAN-GO" id="Q96P71">
    <property type="GO annotations" value="4 GO annotations based on evolutionary models"/>
</dbReference>
<dbReference type="PhylomeDB" id="Q96P71"/>
<dbReference type="TreeFam" id="TF331029"/>
<dbReference type="PathwayCommons" id="Q96P71"/>
<dbReference type="SignaLink" id="Q96P71"/>
<dbReference type="BioGRID-ORCS" id="63941">
    <property type="hits" value="16 hits in 1158 CRISPR screens"/>
</dbReference>
<dbReference type="ChiTaRS" id="NECAB3">
    <property type="organism name" value="human"/>
</dbReference>
<dbReference type="GeneWiki" id="APBA2BP"/>
<dbReference type="GenomeRNAi" id="63941"/>
<dbReference type="Pharos" id="Q96P71">
    <property type="development level" value="Tbio"/>
</dbReference>
<dbReference type="PRO" id="PR:Q96P71"/>
<dbReference type="Proteomes" id="UP000005640">
    <property type="component" value="Chromosome 20"/>
</dbReference>
<dbReference type="RNAct" id="Q96P71">
    <property type="molecule type" value="protein"/>
</dbReference>
<dbReference type="Bgee" id="ENSG00000125967">
    <property type="expression patterns" value="Expressed in right adrenal gland cortex and 194 other cell types or tissues"/>
</dbReference>
<dbReference type="ExpressionAtlas" id="Q96P71">
    <property type="expression patterns" value="baseline and differential"/>
</dbReference>
<dbReference type="GO" id="GO:0005737">
    <property type="term" value="C:cytoplasm"/>
    <property type="evidence" value="ECO:0000314"/>
    <property type="project" value="UniProtKB"/>
</dbReference>
<dbReference type="GO" id="GO:0005783">
    <property type="term" value="C:endoplasmic reticulum"/>
    <property type="evidence" value="ECO:0000318"/>
    <property type="project" value="GO_Central"/>
</dbReference>
<dbReference type="GO" id="GO:0005789">
    <property type="term" value="C:endoplasmic reticulum membrane"/>
    <property type="evidence" value="ECO:0000314"/>
    <property type="project" value="UniProtKB"/>
</dbReference>
<dbReference type="GO" id="GO:0005794">
    <property type="term" value="C:Golgi apparatus"/>
    <property type="evidence" value="ECO:0000314"/>
    <property type="project" value="HPA"/>
</dbReference>
<dbReference type="GO" id="GO:0000137">
    <property type="term" value="C:Golgi cis cisterna"/>
    <property type="evidence" value="ECO:0000314"/>
    <property type="project" value="UniProtKB"/>
</dbReference>
<dbReference type="GO" id="GO:0005634">
    <property type="term" value="C:nucleus"/>
    <property type="evidence" value="ECO:0000303"/>
    <property type="project" value="UniProtKB"/>
</dbReference>
<dbReference type="GO" id="GO:0005509">
    <property type="term" value="F:calcium ion binding"/>
    <property type="evidence" value="ECO:0007669"/>
    <property type="project" value="InterPro"/>
</dbReference>
<dbReference type="GO" id="GO:0019538">
    <property type="term" value="P:protein metabolic process"/>
    <property type="evidence" value="ECO:0000314"/>
    <property type="project" value="UniProtKB"/>
</dbReference>
<dbReference type="GO" id="GO:0009306">
    <property type="term" value="P:protein secretion"/>
    <property type="evidence" value="ECO:0000303"/>
    <property type="project" value="UniProtKB"/>
</dbReference>
<dbReference type="GO" id="GO:0042984">
    <property type="term" value="P:regulation of amyloid precursor protein biosynthetic process"/>
    <property type="evidence" value="ECO:0000314"/>
    <property type="project" value="UniProtKB"/>
</dbReference>
<dbReference type="FunFam" id="1.10.238.10:FF:000670">
    <property type="entry name" value="N-terminal EF-hand calcium binding protein 3"/>
    <property type="match status" value="1"/>
</dbReference>
<dbReference type="FunFam" id="3.30.70.100:FF:000023">
    <property type="entry name" value="N-terminal EF-hand calcium binding protein 3"/>
    <property type="match status" value="1"/>
</dbReference>
<dbReference type="Gene3D" id="3.30.70.100">
    <property type="match status" value="1"/>
</dbReference>
<dbReference type="Gene3D" id="1.10.238.10">
    <property type="entry name" value="EF-hand"/>
    <property type="match status" value="1"/>
</dbReference>
<dbReference type="InterPro" id="IPR007138">
    <property type="entry name" value="ABM_dom"/>
</dbReference>
<dbReference type="InterPro" id="IPR011008">
    <property type="entry name" value="Dimeric_a/b-barrel"/>
</dbReference>
<dbReference type="InterPro" id="IPR011992">
    <property type="entry name" value="EF-hand-dom_pair"/>
</dbReference>
<dbReference type="InterPro" id="IPR018247">
    <property type="entry name" value="EF_Hand_1_Ca_BS"/>
</dbReference>
<dbReference type="InterPro" id="IPR002048">
    <property type="entry name" value="EF_hand_dom"/>
</dbReference>
<dbReference type="InterPro" id="IPR039862">
    <property type="entry name" value="NECAB1/2/3"/>
</dbReference>
<dbReference type="PANTHER" id="PTHR12178">
    <property type="entry name" value="EF-HAND DOMAIN-CONTAINING PROTEIN"/>
    <property type="match status" value="1"/>
</dbReference>
<dbReference type="PANTHER" id="PTHR12178:SF3">
    <property type="entry name" value="N-TERMINAL EF-HAND CALCIUM-BINDING PROTEIN 3"/>
    <property type="match status" value="1"/>
</dbReference>
<dbReference type="Pfam" id="PF03992">
    <property type="entry name" value="ABM"/>
    <property type="match status" value="1"/>
</dbReference>
<dbReference type="Pfam" id="PF13202">
    <property type="entry name" value="EF-hand_5"/>
    <property type="match status" value="1"/>
</dbReference>
<dbReference type="SMART" id="SM00054">
    <property type="entry name" value="EFh"/>
    <property type="match status" value="1"/>
</dbReference>
<dbReference type="SUPFAM" id="SSF54909">
    <property type="entry name" value="Dimeric alpha+beta barrel"/>
    <property type="match status" value="1"/>
</dbReference>
<dbReference type="SUPFAM" id="SSF47473">
    <property type="entry name" value="EF-hand"/>
    <property type="match status" value="1"/>
</dbReference>
<dbReference type="PROSITE" id="PS51725">
    <property type="entry name" value="ABM"/>
    <property type="match status" value="1"/>
</dbReference>
<dbReference type="PROSITE" id="PS00018">
    <property type="entry name" value="EF_HAND_1"/>
    <property type="match status" value="1"/>
</dbReference>
<dbReference type="PROSITE" id="PS50222">
    <property type="entry name" value="EF_HAND_2"/>
    <property type="match status" value="1"/>
</dbReference>
<accession>Q96P71</accession>
<accession>A8K780</accession>
<accession>E1P5N2</accession>
<accession>Q5JWF5</accession>
<accession>Q5JWF6</accession>
<accession>Q5JWF7</accession>
<accession>Q86VV1</accession>
<accession>Q9H433</accession>
<accession>Q9H8G8</accession>
<accession>Q9HBW7</accession>
<accession>Q9HCQ9</accession>
<sequence>MACAGLLTVCLLRPPAPQPQPQTPRHPQLAPDPGPAGHTLFQDVFRRADKNDDGKLSFEEFQNYFADGVLSLGELQELFSGIDGHLTDNLETEKLCDYFSEHLGVYRPVLAALESLNRAVLAAMDATKLEYERASKVDQFVTRFLLRETVSQLQALQSSLEGASDTLEAQAHGWRSDAESVEAQSRLCGSRRAGRRALRSVSRSSTWSPGSSDTGRSSEAEMQWRLQVNRLQELIDQLECKVRAVGPGPHKGGPSWYPPEPGPCWRPGPHSVPSQAPRLEPLREEDLAKGPDLHILMAQRQVQVAEEGLQDFHRALRCYVDFTGAQSHCLHVSAQKMLDGASFTLYEFWQDEASWRRHQQSPGSKAFQRILIDHLRAPDTLTTVFFPASWWIMNNN</sequence>
<protein>
    <recommendedName>
        <fullName>N-terminal EF-hand calcium-binding protein 3</fullName>
    </recommendedName>
    <alternativeName>
        <fullName>Amyloid-beta A4 protein-binding family A member 2-binding protein</fullName>
    </alternativeName>
    <alternativeName>
        <fullName>Nek2-interacting protein 1</fullName>
    </alternativeName>
    <alternativeName>
        <fullName>Neuronal calcium-binding protein 3</fullName>
    </alternativeName>
    <alternativeName>
        <fullName>X11L-binding protein 51</fullName>
    </alternativeName>
</protein>
<keyword id="KW-0025">Alternative splicing</keyword>
<keyword id="KW-0106">Calcium</keyword>
<keyword id="KW-0333">Golgi apparatus</keyword>
<keyword id="KW-0479">Metal-binding</keyword>
<keyword id="KW-0597">Phosphoprotein</keyword>
<keyword id="KW-1267">Proteomics identification</keyword>
<keyword id="KW-1185">Reference proteome</keyword>